<feature type="chain" id="PRO_0000232472" description="Uncharacterized N-acetyltransferase BCE_3967">
    <location>
        <begin position="1"/>
        <end position="157"/>
    </location>
</feature>
<feature type="domain" description="N-acetyltransferase" evidence="1">
    <location>
        <begin position="9"/>
        <end position="146"/>
    </location>
</feature>
<proteinExistence type="inferred from homology"/>
<protein>
    <recommendedName>
        <fullName evidence="1">Uncharacterized N-acetyltransferase BCE_3967</fullName>
        <ecNumber evidence="1">2.3.1.-</ecNumber>
    </recommendedName>
</protein>
<sequence length="157" mass="17955">MGFPKVERLLINYKTLDEFKKFKGCGAQELSMLEELQANIIENNSESPFYGIYYGGSLIARMSLYMKRNGGEPFEITGTYLELYKLEVLPTFQKQGFGEMLVNYAKGLQFPIKTIARIHSAGFWDKLNFQPVSVPDGDFYVWHPETNLNTVTNEESA</sequence>
<reference key="1">
    <citation type="journal article" date="2004" name="Nucleic Acids Res.">
        <title>The genome sequence of Bacillus cereus ATCC 10987 reveals metabolic adaptations and a large plasmid related to Bacillus anthracis pXO1.</title>
        <authorList>
            <person name="Rasko D.A."/>
            <person name="Ravel J."/>
            <person name="Oekstad O.A."/>
            <person name="Helgason E."/>
            <person name="Cer R.Z."/>
            <person name="Jiang L."/>
            <person name="Shores K.A."/>
            <person name="Fouts D.E."/>
            <person name="Tourasse N.J."/>
            <person name="Angiuoli S.V."/>
            <person name="Kolonay J.F."/>
            <person name="Nelson W.C."/>
            <person name="Kolstoe A.-B."/>
            <person name="Fraser C.M."/>
            <person name="Read T.D."/>
        </authorList>
    </citation>
    <scope>NUCLEOTIDE SEQUENCE [LARGE SCALE GENOMIC DNA]</scope>
    <source>
        <strain>ATCC 10987 / NRS 248</strain>
    </source>
</reference>
<accession>Q732E7</accession>
<name>Y3967_BACC1</name>
<comment type="sequence caution" evidence="2">
    <conflict type="erroneous initiation">
        <sequence resource="EMBL-CDS" id="AAS42870"/>
    </conflict>
</comment>
<gene>
    <name type="ordered locus">BCE_3967</name>
</gene>
<keyword id="KW-0012">Acyltransferase</keyword>
<keyword id="KW-0808">Transferase</keyword>
<organism>
    <name type="scientific">Bacillus cereus (strain ATCC 10987 / NRS 248)</name>
    <dbReference type="NCBI Taxonomy" id="222523"/>
    <lineage>
        <taxon>Bacteria</taxon>
        <taxon>Bacillati</taxon>
        <taxon>Bacillota</taxon>
        <taxon>Bacilli</taxon>
        <taxon>Bacillales</taxon>
        <taxon>Bacillaceae</taxon>
        <taxon>Bacillus</taxon>
        <taxon>Bacillus cereus group</taxon>
    </lineage>
</organism>
<evidence type="ECO:0000255" key="1">
    <source>
        <dbReference type="HAMAP-Rule" id="MF_00824"/>
    </source>
</evidence>
<evidence type="ECO:0000305" key="2"/>
<dbReference type="EC" id="2.3.1.-" evidence="1"/>
<dbReference type="EMBL" id="AE017194">
    <property type="protein sequence ID" value="AAS42870.1"/>
    <property type="status" value="ALT_INIT"/>
    <property type="molecule type" value="Genomic_DNA"/>
</dbReference>
<dbReference type="SMR" id="Q732E7"/>
<dbReference type="KEGG" id="bca:BCE_3967"/>
<dbReference type="HOGENOM" id="CLU_136634_0_0_9"/>
<dbReference type="Proteomes" id="UP000002527">
    <property type="component" value="Chromosome"/>
</dbReference>
<dbReference type="GO" id="GO:0016747">
    <property type="term" value="F:acyltransferase activity, transferring groups other than amino-acyl groups"/>
    <property type="evidence" value="ECO:0007669"/>
    <property type="project" value="UniProtKB-UniRule"/>
</dbReference>
<dbReference type="CDD" id="cd04301">
    <property type="entry name" value="NAT_SF"/>
    <property type="match status" value="1"/>
</dbReference>
<dbReference type="Gene3D" id="3.40.630.30">
    <property type="match status" value="1"/>
</dbReference>
<dbReference type="HAMAP" id="MF_00824">
    <property type="entry name" value="Acetyltransf_YlbP"/>
    <property type="match status" value="1"/>
</dbReference>
<dbReference type="InterPro" id="IPR016181">
    <property type="entry name" value="Acyl_CoA_acyltransferase"/>
</dbReference>
<dbReference type="InterPro" id="IPR000182">
    <property type="entry name" value="GNAT_dom"/>
</dbReference>
<dbReference type="InterPro" id="IPR017274">
    <property type="entry name" value="YlbP"/>
</dbReference>
<dbReference type="NCBIfam" id="NF010241">
    <property type="entry name" value="PRK13688.1"/>
    <property type="match status" value="1"/>
</dbReference>
<dbReference type="Pfam" id="PF00583">
    <property type="entry name" value="Acetyltransf_1"/>
    <property type="match status" value="1"/>
</dbReference>
<dbReference type="PIRSF" id="PIRSF037732">
    <property type="entry name" value="YlbP_prd"/>
    <property type="match status" value="1"/>
</dbReference>
<dbReference type="SUPFAM" id="SSF55729">
    <property type="entry name" value="Acyl-CoA N-acyltransferases (Nat)"/>
    <property type="match status" value="1"/>
</dbReference>